<organism>
    <name type="scientific">Burkholderia vietnamiensis (strain G4 / LMG 22486)</name>
    <name type="common">Burkholderia cepacia (strain R1808)</name>
    <dbReference type="NCBI Taxonomy" id="269482"/>
    <lineage>
        <taxon>Bacteria</taxon>
        <taxon>Pseudomonadati</taxon>
        <taxon>Pseudomonadota</taxon>
        <taxon>Betaproteobacteria</taxon>
        <taxon>Burkholderiales</taxon>
        <taxon>Burkholderiaceae</taxon>
        <taxon>Burkholderia</taxon>
        <taxon>Burkholderia cepacia complex</taxon>
    </lineage>
</organism>
<protein>
    <recommendedName>
        <fullName evidence="1">Polyphosphate kinase</fullName>
        <ecNumber evidence="1">2.7.4.1</ecNumber>
    </recommendedName>
    <alternativeName>
        <fullName evidence="1">ATP-polyphosphate phosphotransferase</fullName>
    </alternativeName>
    <alternativeName>
        <fullName evidence="1">Polyphosphoric acid kinase</fullName>
    </alternativeName>
</protein>
<evidence type="ECO:0000255" key="1">
    <source>
        <dbReference type="HAMAP-Rule" id="MF_00347"/>
    </source>
</evidence>
<sequence>MSARYPLLNRELGILGFNERVLAQAADPQVPLLERLRFICITSSNLDEFFEVRMAGLQEQIRDNPGALTPDGMSLQHAYDLVVERAQRLVHRQYTMLHETVLPALEQEGIYFHASDTWNDAQLEWARGYFLDELLPVLTPIGLDPAHPFPRVLNKSLNFVVELEGRDAFGRQAVMGIVQAPRALPRVVRMPQSLSGFEHGFVLLSSFMQRFVGELFPQLVVKSCNQFRITRNSELFVDEDEITNLRVALQGELPARHLGNAVRLEVSADTPAHIVRRLLDESSLGDKDCYRVAGSVNLVRLMQIPDLVDRPDLKFAPFVASIPPAIANAPTMFDAIDAGDILLHHPYESFQPVLELLQQAAKDPSVVAIKQTIYRTGTDSPLMDALMEAARNGKEVTVVVELLARFDEETNINWASQLEAVGAHVVYGVVGHKCHAKMMLIVRRVVEGGKATLRRYVHLGTGNYHPRTARLYTDFGLMTADQKICEDVHHVFQQLTGIGGELTLHELWQSPFTLHPRIIDSIRAEIDNARAGKRARIVAKMNALLEPSVIAALYEASQAGVKVDLIVRGVCALKPGVPGLSENITVRSIVGRFLEHHRIYYFHAGGAEEVYLSSADWMDRNLFRRVEVAFPIRARKLKRRVIAEGLSVCLGDNQSAWLMQSDGHYRRRRAGKTVRNAQLGLLAKFCS</sequence>
<feature type="chain" id="PRO_1000079357" description="Polyphosphate kinase">
    <location>
        <begin position="1"/>
        <end position="687"/>
    </location>
</feature>
<feature type="active site" description="Phosphohistidine intermediate" evidence="1">
    <location>
        <position position="435"/>
    </location>
</feature>
<feature type="binding site" evidence="1">
    <location>
        <position position="45"/>
    </location>
    <ligand>
        <name>ATP</name>
        <dbReference type="ChEBI" id="CHEBI:30616"/>
    </ligand>
</feature>
<feature type="binding site" evidence="1">
    <location>
        <position position="375"/>
    </location>
    <ligand>
        <name>Mg(2+)</name>
        <dbReference type="ChEBI" id="CHEBI:18420"/>
    </ligand>
</feature>
<feature type="binding site" evidence="1">
    <location>
        <position position="405"/>
    </location>
    <ligand>
        <name>Mg(2+)</name>
        <dbReference type="ChEBI" id="CHEBI:18420"/>
    </ligand>
</feature>
<feature type="binding site" evidence="1">
    <location>
        <position position="472"/>
    </location>
    <ligand>
        <name>ATP</name>
        <dbReference type="ChEBI" id="CHEBI:30616"/>
    </ligand>
</feature>
<feature type="binding site" evidence="1">
    <location>
        <position position="568"/>
    </location>
    <ligand>
        <name>ATP</name>
        <dbReference type="ChEBI" id="CHEBI:30616"/>
    </ligand>
</feature>
<feature type="binding site" evidence="1">
    <location>
        <position position="596"/>
    </location>
    <ligand>
        <name>ATP</name>
        <dbReference type="ChEBI" id="CHEBI:30616"/>
    </ligand>
</feature>
<name>PPK1_BURVG</name>
<reference key="1">
    <citation type="submission" date="2007-03" db="EMBL/GenBank/DDBJ databases">
        <title>Complete sequence of chromosome 1 of Burkholderia vietnamiensis G4.</title>
        <authorList>
            <consortium name="US DOE Joint Genome Institute"/>
            <person name="Copeland A."/>
            <person name="Lucas S."/>
            <person name="Lapidus A."/>
            <person name="Barry K."/>
            <person name="Detter J.C."/>
            <person name="Glavina del Rio T."/>
            <person name="Hammon N."/>
            <person name="Israni S."/>
            <person name="Dalin E."/>
            <person name="Tice H."/>
            <person name="Pitluck S."/>
            <person name="Chain P."/>
            <person name="Malfatti S."/>
            <person name="Shin M."/>
            <person name="Vergez L."/>
            <person name="Schmutz J."/>
            <person name="Larimer F."/>
            <person name="Land M."/>
            <person name="Hauser L."/>
            <person name="Kyrpides N."/>
            <person name="Tiedje J."/>
            <person name="Richardson P."/>
        </authorList>
    </citation>
    <scope>NUCLEOTIDE SEQUENCE [LARGE SCALE GENOMIC DNA]</scope>
    <source>
        <strain>G4 / LMG 22486</strain>
    </source>
</reference>
<proteinExistence type="inferred from homology"/>
<gene>
    <name evidence="1" type="primary">ppk</name>
    <name type="ordered locus">Bcep1808_1260</name>
</gene>
<accession>A4JDB7</accession>
<comment type="function">
    <text evidence="1">Catalyzes the reversible transfer of the terminal phosphate of ATP to form a long-chain polyphosphate (polyP).</text>
</comment>
<comment type="catalytic activity">
    <reaction evidence="1">
        <text>[phosphate](n) + ATP = [phosphate](n+1) + ADP</text>
        <dbReference type="Rhea" id="RHEA:19573"/>
        <dbReference type="Rhea" id="RHEA-COMP:9859"/>
        <dbReference type="Rhea" id="RHEA-COMP:14280"/>
        <dbReference type="ChEBI" id="CHEBI:16838"/>
        <dbReference type="ChEBI" id="CHEBI:30616"/>
        <dbReference type="ChEBI" id="CHEBI:456216"/>
        <dbReference type="EC" id="2.7.4.1"/>
    </reaction>
</comment>
<comment type="cofactor">
    <cofactor evidence="1">
        <name>Mg(2+)</name>
        <dbReference type="ChEBI" id="CHEBI:18420"/>
    </cofactor>
</comment>
<comment type="PTM">
    <text evidence="1">An intermediate of this reaction is the autophosphorylated ppk in which a phosphate is covalently linked to a histidine residue through a N-P bond.</text>
</comment>
<comment type="similarity">
    <text evidence="1">Belongs to the polyphosphate kinase 1 (PPK1) family.</text>
</comment>
<keyword id="KW-0067">ATP-binding</keyword>
<keyword id="KW-0418">Kinase</keyword>
<keyword id="KW-0460">Magnesium</keyword>
<keyword id="KW-0479">Metal-binding</keyword>
<keyword id="KW-0547">Nucleotide-binding</keyword>
<keyword id="KW-0597">Phosphoprotein</keyword>
<keyword id="KW-0808">Transferase</keyword>
<dbReference type="EC" id="2.7.4.1" evidence="1"/>
<dbReference type="EMBL" id="CP000614">
    <property type="protein sequence ID" value="ABO54270.1"/>
    <property type="molecule type" value="Genomic_DNA"/>
</dbReference>
<dbReference type="SMR" id="A4JDB7"/>
<dbReference type="KEGG" id="bvi:Bcep1808_1260"/>
<dbReference type="eggNOG" id="COG0855">
    <property type="taxonomic scope" value="Bacteria"/>
</dbReference>
<dbReference type="HOGENOM" id="CLU_009678_5_0_4"/>
<dbReference type="Proteomes" id="UP000002287">
    <property type="component" value="Chromosome 1"/>
</dbReference>
<dbReference type="GO" id="GO:0009358">
    <property type="term" value="C:polyphosphate kinase complex"/>
    <property type="evidence" value="ECO:0007669"/>
    <property type="project" value="InterPro"/>
</dbReference>
<dbReference type="GO" id="GO:0005524">
    <property type="term" value="F:ATP binding"/>
    <property type="evidence" value="ECO:0007669"/>
    <property type="project" value="UniProtKB-KW"/>
</dbReference>
<dbReference type="GO" id="GO:0046872">
    <property type="term" value="F:metal ion binding"/>
    <property type="evidence" value="ECO:0007669"/>
    <property type="project" value="UniProtKB-KW"/>
</dbReference>
<dbReference type="GO" id="GO:0008976">
    <property type="term" value="F:polyphosphate kinase activity"/>
    <property type="evidence" value="ECO:0007669"/>
    <property type="project" value="UniProtKB-UniRule"/>
</dbReference>
<dbReference type="GO" id="GO:0006799">
    <property type="term" value="P:polyphosphate biosynthetic process"/>
    <property type="evidence" value="ECO:0007669"/>
    <property type="project" value="UniProtKB-UniRule"/>
</dbReference>
<dbReference type="CDD" id="cd09165">
    <property type="entry name" value="PLDc_PaPPK1_C1_like"/>
    <property type="match status" value="1"/>
</dbReference>
<dbReference type="CDD" id="cd09168">
    <property type="entry name" value="PLDc_PaPPK1_C2_like"/>
    <property type="match status" value="1"/>
</dbReference>
<dbReference type="Gene3D" id="3.30.870.10">
    <property type="entry name" value="Endonuclease Chain A"/>
    <property type="match status" value="2"/>
</dbReference>
<dbReference type="Gene3D" id="3.30.1840.10">
    <property type="entry name" value="Polyphosphate kinase middle domain"/>
    <property type="match status" value="1"/>
</dbReference>
<dbReference type="Gene3D" id="1.20.58.310">
    <property type="entry name" value="Polyphosphate kinase N-terminal domain"/>
    <property type="match status" value="1"/>
</dbReference>
<dbReference type="HAMAP" id="MF_00347">
    <property type="entry name" value="Polyphosphate_kinase"/>
    <property type="match status" value="1"/>
</dbReference>
<dbReference type="InterPro" id="IPR003414">
    <property type="entry name" value="PP_kinase"/>
</dbReference>
<dbReference type="InterPro" id="IPR041108">
    <property type="entry name" value="PP_kinase_C_1"/>
</dbReference>
<dbReference type="InterPro" id="IPR024953">
    <property type="entry name" value="PP_kinase_middle"/>
</dbReference>
<dbReference type="InterPro" id="IPR036830">
    <property type="entry name" value="PP_kinase_middle_dom_sf"/>
</dbReference>
<dbReference type="InterPro" id="IPR025200">
    <property type="entry name" value="PPK_C_dom2"/>
</dbReference>
<dbReference type="InterPro" id="IPR025198">
    <property type="entry name" value="PPK_N_dom"/>
</dbReference>
<dbReference type="InterPro" id="IPR036832">
    <property type="entry name" value="PPK_N_dom_sf"/>
</dbReference>
<dbReference type="NCBIfam" id="TIGR03705">
    <property type="entry name" value="poly_P_kin"/>
    <property type="match status" value="1"/>
</dbReference>
<dbReference type="NCBIfam" id="NF003917">
    <property type="entry name" value="PRK05443.1-1"/>
    <property type="match status" value="1"/>
</dbReference>
<dbReference type="NCBIfam" id="NF003918">
    <property type="entry name" value="PRK05443.1-2"/>
    <property type="match status" value="1"/>
</dbReference>
<dbReference type="NCBIfam" id="NF003921">
    <property type="entry name" value="PRK05443.2-2"/>
    <property type="match status" value="1"/>
</dbReference>
<dbReference type="PANTHER" id="PTHR30218">
    <property type="entry name" value="POLYPHOSPHATE KINASE"/>
    <property type="match status" value="1"/>
</dbReference>
<dbReference type="PANTHER" id="PTHR30218:SF0">
    <property type="entry name" value="POLYPHOSPHATE KINASE"/>
    <property type="match status" value="1"/>
</dbReference>
<dbReference type="Pfam" id="PF02503">
    <property type="entry name" value="PP_kinase"/>
    <property type="match status" value="1"/>
</dbReference>
<dbReference type="Pfam" id="PF13090">
    <property type="entry name" value="PP_kinase_C"/>
    <property type="match status" value="1"/>
</dbReference>
<dbReference type="Pfam" id="PF17941">
    <property type="entry name" value="PP_kinase_C_1"/>
    <property type="match status" value="1"/>
</dbReference>
<dbReference type="Pfam" id="PF13089">
    <property type="entry name" value="PP_kinase_N"/>
    <property type="match status" value="1"/>
</dbReference>
<dbReference type="PIRSF" id="PIRSF015589">
    <property type="entry name" value="PP_kinase"/>
    <property type="match status" value="1"/>
</dbReference>
<dbReference type="SUPFAM" id="SSF56024">
    <property type="entry name" value="Phospholipase D/nuclease"/>
    <property type="match status" value="2"/>
</dbReference>
<dbReference type="SUPFAM" id="SSF143724">
    <property type="entry name" value="PHP14-like"/>
    <property type="match status" value="1"/>
</dbReference>
<dbReference type="SUPFAM" id="SSF140356">
    <property type="entry name" value="PPK N-terminal domain-like"/>
    <property type="match status" value="1"/>
</dbReference>